<name>NADA_SACS2</name>
<evidence type="ECO:0000255" key="1">
    <source>
        <dbReference type="HAMAP-Rule" id="MF_00568"/>
    </source>
</evidence>
<keyword id="KW-0004">4Fe-4S</keyword>
<keyword id="KW-0963">Cytoplasm</keyword>
<keyword id="KW-0408">Iron</keyword>
<keyword id="KW-0411">Iron-sulfur</keyword>
<keyword id="KW-0479">Metal-binding</keyword>
<keyword id="KW-0662">Pyridine nucleotide biosynthesis</keyword>
<keyword id="KW-1185">Reference proteome</keyword>
<keyword id="KW-0808">Transferase</keyword>
<protein>
    <recommendedName>
        <fullName evidence="1">Quinolinate synthase</fullName>
        <ecNumber evidence="1">2.5.1.72</ecNumber>
    </recommendedName>
</protein>
<sequence length="311" mass="34885">MTRVEELLSQIKNLKTEKNAIILGHNYMEYSVQLVSDFTGDSYDLAVKAMKTNAKIILFAGVYFMAEQASALNPNKKVLSPDPNAGCTLSDSLDVKTLQEYKEKYPNAPVVLYINTSIYAKALADYIVTSSTAVKVVQKLNADTILFGPDANLANYVQQKVPNKKIIKVPPNGRCIVHANYTKQLVELARKKYPNALLMAHPEAPLEILESADFVGSTNQMIQFSKENKNEEFIVATEIGMINALKIKNPSKKFYPLVTTEACACARCPYMNMINLEKVKRSLEEEVYEVKVPEDIAERVKRAFENTMKLL</sequence>
<gene>
    <name evidence="1" type="primary">nadA</name>
    <name type="ordered locus">SSO0998</name>
</gene>
<reference key="1">
    <citation type="journal article" date="2001" name="Proc. Natl. Acad. Sci. U.S.A.">
        <title>The complete genome of the crenarchaeon Sulfolobus solfataricus P2.</title>
        <authorList>
            <person name="She Q."/>
            <person name="Singh R.K."/>
            <person name="Confalonieri F."/>
            <person name="Zivanovic Y."/>
            <person name="Allard G."/>
            <person name="Awayez M.J."/>
            <person name="Chan-Weiher C.C.-Y."/>
            <person name="Clausen I.G."/>
            <person name="Curtis B.A."/>
            <person name="De Moors A."/>
            <person name="Erauso G."/>
            <person name="Fletcher C."/>
            <person name="Gordon P.M.K."/>
            <person name="Heikamp-de Jong I."/>
            <person name="Jeffries A.C."/>
            <person name="Kozera C.J."/>
            <person name="Medina N."/>
            <person name="Peng X."/>
            <person name="Thi-Ngoc H.P."/>
            <person name="Redder P."/>
            <person name="Schenk M.E."/>
            <person name="Theriault C."/>
            <person name="Tolstrup N."/>
            <person name="Charlebois R.L."/>
            <person name="Doolittle W.F."/>
            <person name="Duguet M."/>
            <person name="Gaasterland T."/>
            <person name="Garrett R.A."/>
            <person name="Ragan M.A."/>
            <person name="Sensen C.W."/>
            <person name="Van der Oost J."/>
        </authorList>
    </citation>
    <scope>NUCLEOTIDE SEQUENCE [LARGE SCALE GENOMIC DNA]</scope>
    <source>
        <strain>ATCC 35092 / DSM 1617 / JCM 11322 / P2</strain>
    </source>
</reference>
<proteinExistence type="inferred from homology"/>
<organism>
    <name type="scientific">Saccharolobus solfataricus (strain ATCC 35092 / DSM 1617 / JCM 11322 / P2)</name>
    <name type="common">Sulfolobus solfataricus</name>
    <dbReference type="NCBI Taxonomy" id="273057"/>
    <lineage>
        <taxon>Archaea</taxon>
        <taxon>Thermoproteota</taxon>
        <taxon>Thermoprotei</taxon>
        <taxon>Sulfolobales</taxon>
        <taxon>Sulfolobaceae</taxon>
        <taxon>Saccharolobus</taxon>
    </lineage>
</organism>
<comment type="function">
    <text evidence="1">Catalyzes the condensation of iminoaspartate with dihydroxyacetone phosphate to form quinolinate.</text>
</comment>
<comment type="catalytic activity">
    <reaction evidence="1">
        <text>iminosuccinate + dihydroxyacetone phosphate = quinolinate + phosphate + 2 H2O + H(+)</text>
        <dbReference type="Rhea" id="RHEA:25888"/>
        <dbReference type="ChEBI" id="CHEBI:15377"/>
        <dbReference type="ChEBI" id="CHEBI:15378"/>
        <dbReference type="ChEBI" id="CHEBI:29959"/>
        <dbReference type="ChEBI" id="CHEBI:43474"/>
        <dbReference type="ChEBI" id="CHEBI:57642"/>
        <dbReference type="ChEBI" id="CHEBI:77875"/>
        <dbReference type="EC" id="2.5.1.72"/>
    </reaction>
    <physiologicalReaction direction="left-to-right" evidence="1">
        <dbReference type="Rhea" id="RHEA:25889"/>
    </physiologicalReaction>
</comment>
<comment type="cofactor">
    <cofactor evidence="1">
        <name>[4Fe-4S] cluster</name>
        <dbReference type="ChEBI" id="CHEBI:49883"/>
    </cofactor>
    <text evidence="1">Binds 1 [4Fe-4S] cluster per subunit.</text>
</comment>
<comment type="pathway">
    <text evidence="1">Cofactor biosynthesis; NAD(+) biosynthesis; quinolinate from iminoaspartate: step 1/1.</text>
</comment>
<comment type="subcellular location">
    <subcellularLocation>
        <location evidence="1">Cytoplasm</location>
    </subcellularLocation>
</comment>
<comment type="similarity">
    <text evidence="1">Belongs to the quinolinate synthase family. Type 2 subfamily.</text>
</comment>
<accession>Q97ZC4</accession>
<dbReference type="EC" id="2.5.1.72" evidence="1"/>
<dbReference type="EMBL" id="AE006641">
    <property type="protein sequence ID" value="AAK41269.1"/>
    <property type="molecule type" value="Genomic_DNA"/>
</dbReference>
<dbReference type="PIR" id="F90251">
    <property type="entry name" value="F90251"/>
</dbReference>
<dbReference type="RefSeq" id="WP_009989240.1">
    <property type="nucleotide sequence ID" value="NC_002754.1"/>
</dbReference>
<dbReference type="SMR" id="Q97ZC4"/>
<dbReference type="FunCoup" id="Q97ZC4">
    <property type="interactions" value="100"/>
</dbReference>
<dbReference type="STRING" id="273057.SSO0998"/>
<dbReference type="PaxDb" id="273057-SSO0998"/>
<dbReference type="DNASU" id="1455236"/>
<dbReference type="EnsemblBacteria" id="AAK41269">
    <property type="protein sequence ID" value="AAK41269"/>
    <property type="gene ID" value="SSO0998"/>
</dbReference>
<dbReference type="GeneID" id="44129929"/>
<dbReference type="KEGG" id="sso:SSO0998"/>
<dbReference type="PATRIC" id="fig|273057.12.peg.995"/>
<dbReference type="eggNOG" id="arCOG04459">
    <property type="taxonomic scope" value="Archaea"/>
</dbReference>
<dbReference type="HOGENOM" id="CLU_047382_0_0_2"/>
<dbReference type="InParanoid" id="Q97ZC4"/>
<dbReference type="PhylomeDB" id="Q97ZC4"/>
<dbReference type="UniPathway" id="UPA00253">
    <property type="reaction ID" value="UER00327"/>
</dbReference>
<dbReference type="Proteomes" id="UP000001974">
    <property type="component" value="Chromosome"/>
</dbReference>
<dbReference type="GO" id="GO:0005737">
    <property type="term" value="C:cytoplasm"/>
    <property type="evidence" value="ECO:0007669"/>
    <property type="project" value="UniProtKB-SubCell"/>
</dbReference>
<dbReference type="GO" id="GO:0051539">
    <property type="term" value="F:4 iron, 4 sulfur cluster binding"/>
    <property type="evidence" value="ECO:0000318"/>
    <property type="project" value="GO_Central"/>
</dbReference>
<dbReference type="GO" id="GO:0046872">
    <property type="term" value="F:metal ion binding"/>
    <property type="evidence" value="ECO:0007669"/>
    <property type="project" value="UniProtKB-KW"/>
</dbReference>
<dbReference type="GO" id="GO:0008987">
    <property type="term" value="F:quinolinate synthetase A activity"/>
    <property type="evidence" value="ECO:0000318"/>
    <property type="project" value="GO_Central"/>
</dbReference>
<dbReference type="GO" id="GO:0034628">
    <property type="term" value="P:'de novo' NAD biosynthetic process from L-aspartate"/>
    <property type="evidence" value="ECO:0000318"/>
    <property type="project" value="GO_Central"/>
</dbReference>
<dbReference type="FunFam" id="3.40.50.10800:FF:000001">
    <property type="entry name" value="Quinolinate synthase A"/>
    <property type="match status" value="1"/>
</dbReference>
<dbReference type="Gene3D" id="3.40.50.10800">
    <property type="entry name" value="NadA-like"/>
    <property type="match status" value="3"/>
</dbReference>
<dbReference type="HAMAP" id="MF_00568">
    <property type="entry name" value="NadA_type2"/>
    <property type="match status" value="1"/>
</dbReference>
<dbReference type="InterPro" id="IPR003473">
    <property type="entry name" value="NadA"/>
</dbReference>
<dbReference type="InterPro" id="IPR036094">
    <property type="entry name" value="NadA_sf"/>
</dbReference>
<dbReference type="InterPro" id="IPR023066">
    <property type="entry name" value="Quinolinate_synth_type2"/>
</dbReference>
<dbReference type="NCBIfam" id="TIGR00550">
    <property type="entry name" value="nadA"/>
    <property type="match status" value="1"/>
</dbReference>
<dbReference type="NCBIfam" id="NF006878">
    <property type="entry name" value="PRK09375.1-2"/>
    <property type="match status" value="1"/>
</dbReference>
<dbReference type="PANTHER" id="PTHR30573:SF0">
    <property type="entry name" value="QUINOLINATE SYNTHASE, CHLOROPLASTIC"/>
    <property type="match status" value="1"/>
</dbReference>
<dbReference type="PANTHER" id="PTHR30573">
    <property type="entry name" value="QUINOLINATE SYNTHETASE A"/>
    <property type="match status" value="1"/>
</dbReference>
<dbReference type="Pfam" id="PF02445">
    <property type="entry name" value="NadA"/>
    <property type="match status" value="1"/>
</dbReference>
<dbReference type="SUPFAM" id="SSF142754">
    <property type="entry name" value="NadA-like"/>
    <property type="match status" value="1"/>
</dbReference>
<feature type="chain" id="PRO_0000155812" description="Quinolinate synthase">
    <location>
        <begin position="1"/>
        <end position="311"/>
    </location>
</feature>
<feature type="binding site" evidence="1">
    <location>
        <position position="25"/>
    </location>
    <ligand>
        <name>iminosuccinate</name>
        <dbReference type="ChEBI" id="CHEBI:77875"/>
    </ligand>
</feature>
<feature type="binding site" evidence="1">
    <location>
        <position position="42"/>
    </location>
    <ligand>
        <name>iminosuccinate</name>
        <dbReference type="ChEBI" id="CHEBI:77875"/>
    </ligand>
</feature>
<feature type="binding site" evidence="1">
    <location>
        <position position="87"/>
    </location>
    <ligand>
        <name>[4Fe-4S] cluster</name>
        <dbReference type="ChEBI" id="CHEBI:49883"/>
    </ligand>
</feature>
<feature type="binding site" evidence="1">
    <location>
        <begin position="113"/>
        <end position="115"/>
    </location>
    <ligand>
        <name>iminosuccinate</name>
        <dbReference type="ChEBI" id="CHEBI:77875"/>
    </ligand>
</feature>
<feature type="binding site" evidence="1">
    <location>
        <position position="130"/>
    </location>
    <ligand>
        <name>iminosuccinate</name>
        <dbReference type="ChEBI" id="CHEBI:77875"/>
    </ligand>
</feature>
<feature type="binding site" evidence="1">
    <location>
        <position position="175"/>
    </location>
    <ligand>
        <name>[4Fe-4S] cluster</name>
        <dbReference type="ChEBI" id="CHEBI:49883"/>
    </ligand>
</feature>
<feature type="binding site" evidence="1">
    <location>
        <begin position="201"/>
        <end position="203"/>
    </location>
    <ligand>
        <name>iminosuccinate</name>
        <dbReference type="ChEBI" id="CHEBI:77875"/>
    </ligand>
</feature>
<feature type="binding site" evidence="1">
    <location>
        <position position="218"/>
    </location>
    <ligand>
        <name>iminosuccinate</name>
        <dbReference type="ChEBI" id="CHEBI:77875"/>
    </ligand>
</feature>
<feature type="binding site" evidence="1">
    <location>
        <position position="268"/>
    </location>
    <ligand>
        <name>[4Fe-4S] cluster</name>
        <dbReference type="ChEBI" id="CHEBI:49883"/>
    </ligand>
</feature>